<dbReference type="EC" id="2.6.1.16" evidence="1"/>
<dbReference type="EMBL" id="AE010299">
    <property type="protein sequence ID" value="AAM06396.1"/>
    <property type="molecule type" value="Genomic_DNA"/>
</dbReference>
<dbReference type="RefSeq" id="WP_011022962.1">
    <property type="nucleotide sequence ID" value="NC_003552.1"/>
</dbReference>
<dbReference type="SMR" id="Q8TLL3"/>
<dbReference type="FunCoup" id="Q8TLL3">
    <property type="interactions" value="62"/>
</dbReference>
<dbReference type="STRING" id="188937.MA_3023"/>
<dbReference type="EnsemblBacteria" id="AAM06396">
    <property type="protein sequence ID" value="AAM06396"/>
    <property type="gene ID" value="MA_3023"/>
</dbReference>
<dbReference type="GeneID" id="1474917"/>
<dbReference type="KEGG" id="mac:MA_3023"/>
<dbReference type="HOGENOM" id="CLU_012520_5_2_2"/>
<dbReference type="InParanoid" id="Q8TLL3"/>
<dbReference type="OrthoDB" id="372195at2157"/>
<dbReference type="PhylomeDB" id="Q8TLL3"/>
<dbReference type="Proteomes" id="UP000002487">
    <property type="component" value="Chromosome"/>
</dbReference>
<dbReference type="GO" id="GO:0005737">
    <property type="term" value="C:cytoplasm"/>
    <property type="evidence" value="ECO:0007669"/>
    <property type="project" value="UniProtKB-SubCell"/>
</dbReference>
<dbReference type="GO" id="GO:0097367">
    <property type="term" value="F:carbohydrate derivative binding"/>
    <property type="evidence" value="ECO:0007669"/>
    <property type="project" value="InterPro"/>
</dbReference>
<dbReference type="GO" id="GO:0004360">
    <property type="term" value="F:glutamine-fructose-6-phosphate transaminase (isomerizing) activity"/>
    <property type="evidence" value="ECO:0000318"/>
    <property type="project" value="GO_Central"/>
</dbReference>
<dbReference type="GO" id="GO:0005975">
    <property type="term" value="P:carbohydrate metabolic process"/>
    <property type="evidence" value="ECO:0007669"/>
    <property type="project" value="UniProtKB-UniRule"/>
</dbReference>
<dbReference type="GO" id="GO:0006002">
    <property type="term" value="P:fructose 6-phosphate metabolic process"/>
    <property type="evidence" value="ECO:0000318"/>
    <property type="project" value="GO_Central"/>
</dbReference>
<dbReference type="GO" id="GO:0006487">
    <property type="term" value="P:protein N-linked glycosylation"/>
    <property type="evidence" value="ECO:0000318"/>
    <property type="project" value="GO_Central"/>
</dbReference>
<dbReference type="GO" id="GO:0006047">
    <property type="term" value="P:UDP-N-acetylglucosamine metabolic process"/>
    <property type="evidence" value="ECO:0000318"/>
    <property type="project" value="GO_Central"/>
</dbReference>
<dbReference type="CDD" id="cd00714">
    <property type="entry name" value="GFAT"/>
    <property type="match status" value="1"/>
</dbReference>
<dbReference type="CDD" id="cd05008">
    <property type="entry name" value="SIS_GlmS_GlmD_1"/>
    <property type="match status" value="1"/>
</dbReference>
<dbReference type="CDD" id="cd05009">
    <property type="entry name" value="SIS_GlmS_GlmD_2"/>
    <property type="match status" value="1"/>
</dbReference>
<dbReference type="FunFam" id="3.40.50.10490:FF:000001">
    <property type="entry name" value="Glutamine--fructose-6-phosphate aminotransferase [isomerizing]"/>
    <property type="match status" value="1"/>
</dbReference>
<dbReference type="FunFam" id="3.60.20.10:FF:000006">
    <property type="entry name" value="Glutamine--fructose-6-phosphate aminotransferase [isomerizing]"/>
    <property type="match status" value="1"/>
</dbReference>
<dbReference type="Gene3D" id="3.40.50.10490">
    <property type="entry name" value="Glucose-6-phosphate isomerase like protein, domain 1"/>
    <property type="match status" value="2"/>
</dbReference>
<dbReference type="Gene3D" id="3.60.20.10">
    <property type="entry name" value="Glutamine Phosphoribosylpyrophosphate, subunit 1, domain 1"/>
    <property type="match status" value="1"/>
</dbReference>
<dbReference type="HAMAP" id="MF_00164">
    <property type="entry name" value="GlmS"/>
    <property type="match status" value="1"/>
</dbReference>
<dbReference type="InterPro" id="IPR017932">
    <property type="entry name" value="GATase_2_dom"/>
</dbReference>
<dbReference type="InterPro" id="IPR005855">
    <property type="entry name" value="GFAT"/>
</dbReference>
<dbReference type="InterPro" id="IPR047084">
    <property type="entry name" value="GFAT_N"/>
</dbReference>
<dbReference type="InterPro" id="IPR035466">
    <property type="entry name" value="GlmS/AgaS_SIS"/>
</dbReference>
<dbReference type="InterPro" id="IPR035490">
    <property type="entry name" value="GlmS/FrlB_SIS"/>
</dbReference>
<dbReference type="InterPro" id="IPR029055">
    <property type="entry name" value="Ntn_hydrolases_N"/>
</dbReference>
<dbReference type="InterPro" id="IPR001347">
    <property type="entry name" value="SIS_dom"/>
</dbReference>
<dbReference type="InterPro" id="IPR046348">
    <property type="entry name" value="SIS_dom_sf"/>
</dbReference>
<dbReference type="NCBIfam" id="TIGR01135">
    <property type="entry name" value="glmS"/>
    <property type="match status" value="1"/>
</dbReference>
<dbReference type="NCBIfam" id="NF001484">
    <property type="entry name" value="PRK00331.1"/>
    <property type="match status" value="1"/>
</dbReference>
<dbReference type="PANTHER" id="PTHR10937">
    <property type="entry name" value="GLUCOSAMINE--FRUCTOSE-6-PHOSPHATE AMINOTRANSFERASE, ISOMERIZING"/>
    <property type="match status" value="1"/>
</dbReference>
<dbReference type="PANTHER" id="PTHR10937:SF0">
    <property type="entry name" value="GLUTAMINE--FRUCTOSE-6-PHOSPHATE TRANSAMINASE (ISOMERIZING)"/>
    <property type="match status" value="1"/>
</dbReference>
<dbReference type="Pfam" id="PF13522">
    <property type="entry name" value="GATase_6"/>
    <property type="match status" value="1"/>
</dbReference>
<dbReference type="Pfam" id="PF01380">
    <property type="entry name" value="SIS"/>
    <property type="match status" value="2"/>
</dbReference>
<dbReference type="SUPFAM" id="SSF56235">
    <property type="entry name" value="N-terminal nucleophile aminohydrolases (Ntn hydrolases)"/>
    <property type="match status" value="1"/>
</dbReference>
<dbReference type="SUPFAM" id="SSF53697">
    <property type="entry name" value="SIS domain"/>
    <property type="match status" value="1"/>
</dbReference>
<dbReference type="PROSITE" id="PS51278">
    <property type="entry name" value="GATASE_TYPE_2"/>
    <property type="match status" value="1"/>
</dbReference>
<dbReference type="PROSITE" id="PS51464">
    <property type="entry name" value="SIS"/>
    <property type="match status" value="2"/>
</dbReference>
<keyword id="KW-0032">Aminotransferase</keyword>
<keyword id="KW-0963">Cytoplasm</keyword>
<keyword id="KW-0315">Glutamine amidotransferase</keyword>
<keyword id="KW-1185">Reference proteome</keyword>
<keyword id="KW-0677">Repeat</keyword>
<keyword id="KW-0808">Transferase</keyword>
<proteinExistence type="inferred from homology"/>
<reference key="1">
    <citation type="journal article" date="2002" name="Genome Res.">
        <title>The genome of Methanosarcina acetivorans reveals extensive metabolic and physiological diversity.</title>
        <authorList>
            <person name="Galagan J.E."/>
            <person name="Nusbaum C."/>
            <person name="Roy A."/>
            <person name="Endrizzi M.G."/>
            <person name="Macdonald P."/>
            <person name="FitzHugh W."/>
            <person name="Calvo S."/>
            <person name="Engels R."/>
            <person name="Smirnov S."/>
            <person name="Atnoor D."/>
            <person name="Brown A."/>
            <person name="Allen N."/>
            <person name="Naylor J."/>
            <person name="Stange-Thomann N."/>
            <person name="DeArellano K."/>
            <person name="Johnson R."/>
            <person name="Linton L."/>
            <person name="McEwan P."/>
            <person name="McKernan K."/>
            <person name="Talamas J."/>
            <person name="Tirrell A."/>
            <person name="Ye W."/>
            <person name="Zimmer A."/>
            <person name="Barber R.D."/>
            <person name="Cann I."/>
            <person name="Graham D.E."/>
            <person name="Grahame D.A."/>
            <person name="Guss A.M."/>
            <person name="Hedderich R."/>
            <person name="Ingram-Smith C."/>
            <person name="Kuettner H.C."/>
            <person name="Krzycki J.A."/>
            <person name="Leigh J.A."/>
            <person name="Li W."/>
            <person name="Liu J."/>
            <person name="Mukhopadhyay B."/>
            <person name="Reeve J.N."/>
            <person name="Smith K."/>
            <person name="Springer T.A."/>
            <person name="Umayam L.A."/>
            <person name="White O."/>
            <person name="White R.H."/>
            <person name="de Macario E.C."/>
            <person name="Ferry J.G."/>
            <person name="Jarrell K.F."/>
            <person name="Jing H."/>
            <person name="Macario A.J.L."/>
            <person name="Paulsen I.T."/>
            <person name="Pritchett M."/>
            <person name="Sowers K.R."/>
            <person name="Swanson R.V."/>
            <person name="Zinder S.H."/>
            <person name="Lander E."/>
            <person name="Metcalf W.W."/>
            <person name="Birren B."/>
        </authorList>
    </citation>
    <scope>NUCLEOTIDE SEQUENCE [LARGE SCALE GENOMIC DNA]</scope>
    <source>
        <strain>ATCC 35395 / DSM 2834 / JCM 12185 / C2A</strain>
    </source>
</reference>
<evidence type="ECO:0000255" key="1">
    <source>
        <dbReference type="HAMAP-Rule" id="MF_00164"/>
    </source>
</evidence>
<evidence type="ECO:0000256" key="2">
    <source>
        <dbReference type="SAM" id="MobiDB-lite"/>
    </source>
</evidence>
<organism>
    <name type="scientific">Methanosarcina acetivorans (strain ATCC 35395 / DSM 2834 / JCM 12185 / C2A)</name>
    <dbReference type="NCBI Taxonomy" id="188937"/>
    <lineage>
        <taxon>Archaea</taxon>
        <taxon>Methanobacteriati</taxon>
        <taxon>Methanobacteriota</taxon>
        <taxon>Stenosarchaea group</taxon>
        <taxon>Methanomicrobia</taxon>
        <taxon>Methanosarcinales</taxon>
        <taxon>Methanosarcinaceae</taxon>
        <taxon>Methanosarcina</taxon>
    </lineage>
</organism>
<comment type="function">
    <text evidence="1">Catalyzes the first step in hexosamine metabolism, converting fructose-6P into glucosamine-6P using glutamine as a nitrogen source.</text>
</comment>
<comment type="catalytic activity">
    <reaction evidence="1">
        <text>D-fructose 6-phosphate + L-glutamine = D-glucosamine 6-phosphate + L-glutamate</text>
        <dbReference type="Rhea" id="RHEA:13237"/>
        <dbReference type="ChEBI" id="CHEBI:29985"/>
        <dbReference type="ChEBI" id="CHEBI:58359"/>
        <dbReference type="ChEBI" id="CHEBI:58725"/>
        <dbReference type="ChEBI" id="CHEBI:61527"/>
        <dbReference type="EC" id="2.6.1.16"/>
    </reaction>
</comment>
<comment type="subunit">
    <text evidence="1">Homodimer.</text>
</comment>
<comment type="subcellular location">
    <subcellularLocation>
        <location evidence="1">Cytoplasm</location>
    </subcellularLocation>
</comment>
<protein>
    <recommendedName>
        <fullName evidence="1">Glutamine--fructose-6-phosphate aminotransferase [isomerizing]</fullName>
        <ecNumber evidence="1">2.6.1.16</ecNumber>
    </recommendedName>
    <alternativeName>
        <fullName evidence="1">D-fructose-6-phosphate amidotransferase</fullName>
    </alternativeName>
    <alternativeName>
        <fullName evidence="1">GFAT</fullName>
    </alternativeName>
    <alternativeName>
        <fullName evidence="1">Glucosamine-6-phosphate synthase</fullName>
    </alternativeName>
    <alternativeName>
        <fullName evidence="1">Hexosephosphate aminotransferase</fullName>
    </alternativeName>
    <alternativeName>
        <fullName evidence="1">L-glutamine--D-fructose-6-phosphate amidotransferase</fullName>
    </alternativeName>
</protein>
<feature type="initiator methionine" description="Removed" evidence="1">
    <location>
        <position position="1"/>
    </location>
</feature>
<feature type="chain" id="PRO_0000135424" description="Glutamine--fructose-6-phosphate aminotransferase [isomerizing]">
    <location>
        <begin position="2"/>
        <end position="618"/>
    </location>
</feature>
<feature type="domain" description="Glutamine amidotransferase type-2" evidence="1">
    <location>
        <begin position="2"/>
        <end position="226"/>
    </location>
</feature>
<feature type="domain" description="SIS 1" evidence="1">
    <location>
        <begin position="295"/>
        <end position="434"/>
    </location>
</feature>
<feature type="domain" description="SIS 2" evidence="1">
    <location>
        <begin position="467"/>
        <end position="608"/>
    </location>
</feature>
<feature type="region of interest" description="Disordered" evidence="2">
    <location>
        <begin position="69"/>
        <end position="94"/>
    </location>
</feature>
<feature type="active site" description="Nucleophile; for GATase activity" evidence="1">
    <location>
        <position position="2"/>
    </location>
</feature>
<feature type="active site" description="For Fru-6P isomerization activity" evidence="1">
    <location>
        <position position="613"/>
    </location>
</feature>
<gene>
    <name evidence="1" type="primary">glmS</name>
    <name type="ordered locus">MA_3023</name>
</gene>
<accession>Q8TLL3</accession>
<name>GLMS_METAC</name>
<sequence>MCGIVGYAGRNAAAPVIIESLKKLEYRGYDSAGITVLSKGIETYKAVGKIVNLEVEIPKNLGGTVGIGHTRWATHGRPSTKNAHPHNSGGNPGKISLVHNGIIENYMALKEQLTGEGYVFNSETDTEVIAHLVHKHIYGKPDGKEAKCELLVGLREALKEIEGSYALAILSADEPGKLVLARKDSPLVIGLGKGENFAASDVTAFLNHTRDVVFVNDFETAVLSPTSVEIFDREGKPREKKIEKIEWDFEAAEKAGYEHFMLKEIHEQVTAIHNTLAGKVSELEGDIYLKELNLSEDEIRKLARVQILACGTSWHAGLLGKYLFEQLAGIHCDIDICSEYRYRNPVMNEGTLAIAITQSGETADTLAAVREIMSYNCPTLAITNVVGSTITREANSVLYTRAGPEIGVAATKTFTTQLTLLYLLAVKFALVRDRLSPDYVKSFITDLRKVPGQIQQILNQKEAIKECAEGFARSKSYFFLGRHLNYPIALEGALKLKEISYVHAEGFAAGELKHGPIALLDEGTPVVAIATRGQTYEKMLSNIKEVKARDAFVIAVADNKDTEITKYVDVVLRVPQSDELLAPLLSIVVLQLLAYYTALARNCSIDKPRNLAKSVTVE</sequence>